<sequence length="437" mass="49090">MLDKNKQIWFIGIKGTGMASLALLLHDLGYNVAGSDIEKYTFTQVPLEKVGVDVKNFDPANIKSNDEQVIVKGNAFKEDNPEVKACIDKGVKWQSYPDTVEEIVQMHTSIGISGTHGKTSTTSLLSHVLGEVAPTSYLIGDGRGKGVEGSRFFVYEADEYRRHFLAYHPDYQIMTNIDFDHPDYFKDQADYTSAFQSAADQTKKALFVWGDDKRLQSLKTDIPKYTYGFKDTDDFQAVDIKKSTTGSKFHVLAHGKDLGEFEIHLFGDHSILNATAVIAVAYTEKVPMDDIREGMLTFKGAKRRFSEKDFGDIAVIDDYAHHPTEMRATIQAARQKFPDKKLVVVFQPHTFSRTKKYQKDFEEILRDVDKAYVTPIYASAREANGDISSEDLVKNIPGSEVIDLDNIADLTKNKNSVIVFMGAGDIPKYEDAFEKLL</sequence>
<dbReference type="EC" id="6.3.2.8" evidence="1"/>
<dbReference type="EMBL" id="CP000517">
    <property type="protein sequence ID" value="ABX27547.1"/>
    <property type="molecule type" value="Genomic_DNA"/>
</dbReference>
<dbReference type="RefSeq" id="WP_012212142.1">
    <property type="nucleotide sequence ID" value="NC_010080.1"/>
</dbReference>
<dbReference type="SMR" id="A8YWG1"/>
<dbReference type="KEGG" id="lhe:lhv_1636"/>
<dbReference type="eggNOG" id="COG0773">
    <property type="taxonomic scope" value="Bacteria"/>
</dbReference>
<dbReference type="HOGENOM" id="CLU_028104_1_0_9"/>
<dbReference type="UniPathway" id="UPA00219"/>
<dbReference type="Proteomes" id="UP000000790">
    <property type="component" value="Chromosome"/>
</dbReference>
<dbReference type="GO" id="GO:0005737">
    <property type="term" value="C:cytoplasm"/>
    <property type="evidence" value="ECO:0007669"/>
    <property type="project" value="UniProtKB-SubCell"/>
</dbReference>
<dbReference type="GO" id="GO:0005524">
    <property type="term" value="F:ATP binding"/>
    <property type="evidence" value="ECO:0007669"/>
    <property type="project" value="UniProtKB-UniRule"/>
</dbReference>
<dbReference type="GO" id="GO:0008763">
    <property type="term" value="F:UDP-N-acetylmuramate-L-alanine ligase activity"/>
    <property type="evidence" value="ECO:0007669"/>
    <property type="project" value="UniProtKB-UniRule"/>
</dbReference>
<dbReference type="GO" id="GO:0051301">
    <property type="term" value="P:cell division"/>
    <property type="evidence" value="ECO:0007669"/>
    <property type="project" value="UniProtKB-KW"/>
</dbReference>
<dbReference type="GO" id="GO:0071555">
    <property type="term" value="P:cell wall organization"/>
    <property type="evidence" value="ECO:0007669"/>
    <property type="project" value="UniProtKB-KW"/>
</dbReference>
<dbReference type="GO" id="GO:0009252">
    <property type="term" value="P:peptidoglycan biosynthetic process"/>
    <property type="evidence" value="ECO:0007669"/>
    <property type="project" value="UniProtKB-UniRule"/>
</dbReference>
<dbReference type="GO" id="GO:0008360">
    <property type="term" value="P:regulation of cell shape"/>
    <property type="evidence" value="ECO:0007669"/>
    <property type="project" value="UniProtKB-KW"/>
</dbReference>
<dbReference type="Gene3D" id="3.90.190.20">
    <property type="entry name" value="Mur ligase, C-terminal domain"/>
    <property type="match status" value="1"/>
</dbReference>
<dbReference type="Gene3D" id="3.40.1190.10">
    <property type="entry name" value="Mur-like, catalytic domain"/>
    <property type="match status" value="1"/>
</dbReference>
<dbReference type="Gene3D" id="3.40.50.720">
    <property type="entry name" value="NAD(P)-binding Rossmann-like Domain"/>
    <property type="match status" value="1"/>
</dbReference>
<dbReference type="HAMAP" id="MF_00046">
    <property type="entry name" value="MurC"/>
    <property type="match status" value="1"/>
</dbReference>
<dbReference type="InterPro" id="IPR036565">
    <property type="entry name" value="Mur-like_cat_sf"/>
</dbReference>
<dbReference type="InterPro" id="IPR004101">
    <property type="entry name" value="Mur_ligase_C"/>
</dbReference>
<dbReference type="InterPro" id="IPR036615">
    <property type="entry name" value="Mur_ligase_C_dom_sf"/>
</dbReference>
<dbReference type="InterPro" id="IPR013221">
    <property type="entry name" value="Mur_ligase_cen"/>
</dbReference>
<dbReference type="InterPro" id="IPR000713">
    <property type="entry name" value="Mur_ligase_N"/>
</dbReference>
<dbReference type="InterPro" id="IPR050061">
    <property type="entry name" value="MurCDEF_pg_biosynth"/>
</dbReference>
<dbReference type="InterPro" id="IPR005758">
    <property type="entry name" value="UDP-N-AcMur_Ala_ligase_MurC"/>
</dbReference>
<dbReference type="NCBIfam" id="TIGR01082">
    <property type="entry name" value="murC"/>
    <property type="match status" value="1"/>
</dbReference>
<dbReference type="PANTHER" id="PTHR43445:SF3">
    <property type="entry name" value="UDP-N-ACETYLMURAMATE--L-ALANINE LIGASE"/>
    <property type="match status" value="1"/>
</dbReference>
<dbReference type="PANTHER" id="PTHR43445">
    <property type="entry name" value="UDP-N-ACETYLMURAMATE--L-ALANINE LIGASE-RELATED"/>
    <property type="match status" value="1"/>
</dbReference>
<dbReference type="Pfam" id="PF01225">
    <property type="entry name" value="Mur_ligase"/>
    <property type="match status" value="1"/>
</dbReference>
<dbReference type="Pfam" id="PF02875">
    <property type="entry name" value="Mur_ligase_C"/>
    <property type="match status" value="1"/>
</dbReference>
<dbReference type="Pfam" id="PF08245">
    <property type="entry name" value="Mur_ligase_M"/>
    <property type="match status" value="1"/>
</dbReference>
<dbReference type="SUPFAM" id="SSF51984">
    <property type="entry name" value="MurCD N-terminal domain"/>
    <property type="match status" value="1"/>
</dbReference>
<dbReference type="SUPFAM" id="SSF53623">
    <property type="entry name" value="MurD-like peptide ligases, catalytic domain"/>
    <property type="match status" value="1"/>
</dbReference>
<dbReference type="SUPFAM" id="SSF53244">
    <property type="entry name" value="MurD-like peptide ligases, peptide-binding domain"/>
    <property type="match status" value="1"/>
</dbReference>
<accession>A8YWG1</accession>
<keyword id="KW-0067">ATP-binding</keyword>
<keyword id="KW-0131">Cell cycle</keyword>
<keyword id="KW-0132">Cell division</keyword>
<keyword id="KW-0133">Cell shape</keyword>
<keyword id="KW-0961">Cell wall biogenesis/degradation</keyword>
<keyword id="KW-0963">Cytoplasm</keyword>
<keyword id="KW-0436">Ligase</keyword>
<keyword id="KW-0547">Nucleotide-binding</keyword>
<keyword id="KW-0573">Peptidoglycan synthesis</keyword>
<reference key="1">
    <citation type="journal article" date="2008" name="J. Bacteriol.">
        <title>Genome sequence of Lactobacillus helveticus: an organism distinguished by selective gene loss and IS element expansion.</title>
        <authorList>
            <person name="Callanan M."/>
            <person name="Kaleta P."/>
            <person name="O'Callaghan J."/>
            <person name="O'Sullivan O."/>
            <person name="Jordan K."/>
            <person name="McAuliffe O."/>
            <person name="Sangrador-Vegas A."/>
            <person name="Slattery L."/>
            <person name="Fitzgerald G.F."/>
            <person name="Beresford T."/>
            <person name="Ross R.P."/>
        </authorList>
    </citation>
    <scope>NUCLEOTIDE SEQUENCE [LARGE SCALE GENOMIC DNA]</scope>
    <source>
        <strain>DPC 4571</strain>
    </source>
</reference>
<feature type="chain" id="PRO_1000071096" description="UDP-N-acetylmuramate--L-alanine ligase">
    <location>
        <begin position="1"/>
        <end position="437"/>
    </location>
</feature>
<feature type="binding site" evidence="1">
    <location>
        <begin position="114"/>
        <end position="120"/>
    </location>
    <ligand>
        <name>ATP</name>
        <dbReference type="ChEBI" id="CHEBI:30616"/>
    </ligand>
</feature>
<evidence type="ECO:0000255" key="1">
    <source>
        <dbReference type="HAMAP-Rule" id="MF_00046"/>
    </source>
</evidence>
<comment type="function">
    <text evidence="1">Cell wall formation.</text>
</comment>
<comment type="catalytic activity">
    <reaction evidence="1">
        <text>UDP-N-acetyl-alpha-D-muramate + L-alanine + ATP = UDP-N-acetyl-alpha-D-muramoyl-L-alanine + ADP + phosphate + H(+)</text>
        <dbReference type="Rhea" id="RHEA:23372"/>
        <dbReference type="ChEBI" id="CHEBI:15378"/>
        <dbReference type="ChEBI" id="CHEBI:30616"/>
        <dbReference type="ChEBI" id="CHEBI:43474"/>
        <dbReference type="ChEBI" id="CHEBI:57972"/>
        <dbReference type="ChEBI" id="CHEBI:70757"/>
        <dbReference type="ChEBI" id="CHEBI:83898"/>
        <dbReference type="ChEBI" id="CHEBI:456216"/>
        <dbReference type="EC" id="6.3.2.8"/>
    </reaction>
</comment>
<comment type="pathway">
    <text evidence="1">Cell wall biogenesis; peptidoglycan biosynthesis.</text>
</comment>
<comment type="subcellular location">
    <subcellularLocation>
        <location evidence="1">Cytoplasm</location>
    </subcellularLocation>
</comment>
<comment type="similarity">
    <text evidence="1">Belongs to the MurCDEF family.</text>
</comment>
<gene>
    <name evidence="1" type="primary">murC</name>
    <name type="ordered locus">lhv_1636</name>
</gene>
<proteinExistence type="inferred from homology"/>
<name>MURC_LACH4</name>
<organism>
    <name type="scientific">Lactobacillus helveticus (strain DPC 4571)</name>
    <dbReference type="NCBI Taxonomy" id="405566"/>
    <lineage>
        <taxon>Bacteria</taxon>
        <taxon>Bacillati</taxon>
        <taxon>Bacillota</taxon>
        <taxon>Bacilli</taxon>
        <taxon>Lactobacillales</taxon>
        <taxon>Lactobacillaceae</taxon>
        <taxon>Lactobacillus</taxon>
    </lineage>
</organism>
<protein>
    <recommendedName>
        <fullName evidence="1">UDP-N-acetylmuramate--L-alanine ligase</fullName>
        <ecNumber evidence="1">6.3.2.8</ecNumber>
    </recommendedName>
    <alternativeName>
        <fullName evidence="1">UDP-N-acetylmuramoyl-L-alanine synthetase</fullName>
    </alternativeName>
</protein>